<organism>
    <name type="scientific">Desulforamulus reducens (strain ATCC BAA-1160 / DSM 100696 / MI-1)</name>
    <name type="common">Desulfotomaculum reducens</name>
    <dbReference type="NCBI Taxonomy" id="349161"/>
    <lineage>
        <taxon>Bacteria</taxon>
        <taxon>Bacillati</taxon>
        <taxon>Bacillota</taxon>
        <taxon>Clostridia</taxon>
        <taxon>Eubacteriales</taxon>
        <taxon>Peptococcaceae</taxon>
        <taxon>Desulforamulus</taxon>
    </lineage>
</organism>
<sequence>MNWLEIAVHVCPEGIDMVSNIFDELGAGGVVIEDPALINRYIEANIWDHYEFPPEVLNRPQPIVKAYLPEGPNLENKLVLLQERLTGLPLDAVPTFERRQVAEEDWATAWMKYYKPVEIGQKLAVKPSWEDYVPEDGRIVLEMDPGMAFGCGNHPTTTMCMEYLEGIIQGGESVADVGTGTGILAITSAKLGAARVLAVDLDEVAVKVSQENVERNGVQDIVEVFHGNLLDKVESKVDVVIANIVANVIMILAPDVPRILKHGGYFITSGIIQFRAEEVRQKLEQTGFKILGRKEDGEWVSYLCILEG</sequence>
<evidence type="ECO:0000255" key="1">
    <source>
        <dbReference type="HAMAP-Rule" id="MF_00735"/>
    </source>
</evidence>
<gene>
    <name evidence="1" type="primary">prmA</name>
    <name type="ordered locus">Dred_2494</name>
</gene>
<dbReference type="EC" id="2.1.1.-" evidence="1"/>
<dbReference type="EMBL" id="CP000612">
    <property type="protein sequence ID" value="ABO51004.1"/>
    <property type="molecule type" value="Genomic_DNA"/>
</dbReference>
<dbReference type="RefSeq" id="WP_011878802.1">
    <property type="nucleotide sequence ID" value="NC_009253.1"/>
</dbReference>
<dbReference type="SMR" id="A4J7F1"/>
<dbReference type="STRING" id="349161.Dred_2494"/>
<dbReference type="KEGG" id="drm:Dred_2494"/>
<dbReference type="eggNOG" id="COG2264">
    <property type="taxonomic scope" value="Bacteria"/>
</dbReference>
<dbReference type="HOGENOM" id="CLU_049382_0_1_9"/>
<dbReference type="OrthoDB" id="9785995at2"/>
<dbReference type="Proteomes" id="UP000001556">
    <property type="component" value="Chromosome"/>
</dbReference>
<dbReference type="GO" id="GO:0005737">
    <property type="term" value="C:cytoplasm"/>
    <property type="evidence" value="ECO:0007669"/>
    <property type="project" value="UniProtKB-SubCell"/>
</dbReference>
<dbReference type="GO" id="GO:0016279">
    <property type="term" value="F:protein-lysine N-methyltransferase activity"/>
    <property type="evidence" value="ECO:0007669"/>
    <property type="project" value="RHEA"/>
</dbReference>
<dbReference type="GO" id="GO:0032259">
    <property type="term" value="P:methylation"/>
    <property type="evidence" value="ECO:0007669"/>
    <property type="project" value="UniProtKB-KW"/>
</dbReference>
<dbReference type="CDD" id="cd02440">
    <property type="entry name" value="AdoMet_MTases"/>
    <property type="match status" value="1"/>
</dbReference>
<dbReference type="Gene3D" id="3.40.50.150">
    <property type="entry name" value="Vaccinia Virus protein VP39"/>
    <property type="match status" value="1"/>
</dbReference>
<dbReference type="HAMAP" id="MF_00735">
    <property type="entry name" value="Methyltr_PrmA"/>
    <property type="match status" value="1"/>
</dbReference>
<dbReference type="InterPro" id="IPR050078">
    <property type="entry name" value="Ribosomal_L11_MeTrfase_PrmA"/>
</dbReference>
<dbReference type="InterPro" id="IPR004498">
    <property type="entry name" value="Ribosomal_PrmA_MeTrfase"/>
</dbReference>
<dbReference type="InterPro" id="IPR029063">
    <property type="entry name" value="SAM-dependent_MTases_sf"/>
</dbReference>
<dbReference type="NCBIfam" id="TIGR00406">
    <property type="entry name" value="prmA"/>
    <property type="match status" value="1"/>
</dbReference>
<dbReference type="PANTHER" id="PTHR43648">
    <property type="entry name" value="ELECTRON TRANSFER FLAVOPROTEIN BETA SUBUNIT LYSINE METHYLTRANSFERASE"/>
    <property type="match status" value="1"/>
</dbReference>
<dbReference type="PANTHER" id="PTHR43648:SF1">
    <property type="entry name" value="ELECTRON TRANSFER FLAVOPROTEIN BETA SUBUNIT LYSINE METHYLTRANSFERASE"/>
    <property type="match status" value="1"/>
</dbReference>
<dbReference type="Pfam" id="PF06325">
    <property type="entry name" value="PrmA"/>
    <property type="match status" value="1"/>
</dbReference>
<dbReference type="PIRSF" id="PIRSF000401">
    <property type="entry name" value="RPL11_MTase"/>
    <property type="match status" value="1"/>
</dbReference>
<dbReference type="SUPFAM" id="SSF53335">
    <property type="entry name" value="S-adenosyl-L-methionine-dependent methyltransferases"/>
    <property type="match status" value="1"/>
</dbReference>
<accession>A4J7F1</accession>
<proteinExistence type="inferred from homology"/>
<feature type="chain" id="PRO_1000072791" description="Ribosomal protein L11 methyltransferase">
    <location>
        <begin position="1"/>
        <end position="308"/>
    </location>
</feature>
<feature type="binding site" evidence="1">
    <location>
        <position position="157"/>
    </location>
    <ligand>
        <name>S-adenosyl-L-methionine</name>
        <dbReference type="ChEBI" id="CHEBI:59789"/>
    </ligand>
</feature>
<feature type="binding site" evidence="1">
    <location>
        <position position="178"/>
    </location>
    <ligand>
        <name>S-adenosyl-L-methionine</name>
        <dbReference type="ChEBI" id="CHEBI:59789"/>
    </ligand>
</feature>
<feature type="binding site" evidence="1">
    <location>
        <position position="200"/>
    </location>
    <ligand>
        <name>S-adenosyl-L-methionine</name>
        <dbReference type="ChEBI" id="CHEBI:59789"/>
    </ligand>
</feature>
<feature type="binding site" evidence="1">
    <location>
        <position position="243"/>
    </location>
    <ligand>
        <name>S-adenosyl-L-methionine</name>
        <dbReference type="ChEBI" id="CHEBI:59789"/>
    </ligand>
</feature>
<keyword id="KW-0963">Cytoplasm</keyword>
<keyword id="KW-0489">Methyltransferase</keyword>
<keyword id="KW-1185">Reference proteome</keyword>
<keyword id="KW-0949">S-adenosyl-L-methionine</keyword>
<keyword id="KW-0808">Transferase</keyword>
<reference key="1">
    <citation type="submission" date="2007-03" db="EMBL/GenBank/DDBJ databases">
        <title>Complete sequence of Desulfotomaculum reducens MI-1.</title>
        <authorList>
            <consortium name="US DOE Joint Genome Institute"/>
            <person name="Copeland A."/>
            <person name="Lucas S."/>
            <person name="Lapidus A."/>
            <person name="Barry K."/>
            <person name="Detter J.C."/>
            <person name="Glavina del Rio T."/>
            <person name="Hammon N."/>
            <person name="Israni S."/>
            <person name="Dalin E."/>
            <person name="Tice H."/>
            <person name="Pitluck S."/>
            <person name="Sims D."/>
            <person name="Brettin T."/>
            <person name="Bruce D."/>
            <person name="Han C."/>
            <person name="Tapia R."/>
            <person name="Schmutz J."/>
            <person name="Larimer F."/>
            <person name="Land M."/>
            <person name="Hauser L."/>
            <person name="Kyrpides N."/>
            <person name="Kim E."/>
            <person name="Tebo B.M."/>
            <person name="Richardson P."/>
        </authorList>
    </citation>
    <scope>NUCLEOTIDE SEQUENCE [LARGE SCALE GENOMIC DNA]</scope>
    <source>
        <strain>ATCC BAA-1160 / DSM 100696 / MI-1</strain>
    </source>
</reference>
<comment type="function">
    <text evidence="1">Methylates ribosomal protein L11.</text>
</comment>
<comment type="catalytic activity">
    <reaction evidence="1">
        <text>L-lysyl-[protein] + 3 S-adenosyl-L-methionine = N(6),N(6),N(6)-trimethyl-L-lysyl-[protein] + 3 S-adenosyl-L-homocysteine + 3 H(+)</text>
        <dbReference type="Rhea" id="RHEA:54192"/>
        <dbReference type="Rhea" id="RHEA-COMP:9752"/>
        <dbReference type="Rhea" id="RHEA-COMP:13826"/>
        <dbReference type="ChEBI" id="CHEBI:15378"/>
        <dbReference type="ChEBI" id="CHEBI:29969"/>
        <dbReference type="ChEBI" id="CHEBI:57856"/>
        <dbReference type="ChEBI" id="CHEBI:59789"/>
        <dbReference type="ChEBI" id="CHEBI:61961"/>
    </reaction>
</comment>
<comment type="subcellular location">
    <subcellularLocation>
        <location evidence="1">Cytoplasm</location>
    </subcellularLocation>
</comment>
<comment type="similarity">
    <text evidence="1">Belongs to the methyltransferase superfamily. PrmA family.</text>
</comment>
<protein>
    <recommendedName>
        <fullName evidence="1">Ribosomal protein L11 methyltransferase</fullName>
        <shortName evidence="1">L11 Mtase</shortName>
        <ecNumber evidence="1">2.1.1.-</ecNumber>
    </recommendedName>
</protein>
<name>PRMA_DESRM</name>